<gene>
    <name evidence="1" type="primary">ileS</name>
    <name type="ordered locus">MHP7448_0032</name>
</gene>
<organism>
    <name type="scientific">Mesomycoplasma hyopneumoniae (strain 7448)</name>
    <name type="common">Mycoplasma hyopneumoniae</name>
    <dbReference type="NCBI Taxonomy" id="262722"/>
    <lineage>
        <taxon>Bacteria</taxon>
        <taxon>Bacillati</taxon>
        <taxon>Mycoplasmatota</taxon>
        <taxon>Mycoplasmoidales</taxon>
        <taxon>Metamycoplasmataceae</taxon>
        <taxon>Mesomycoplasma</taxon>
    </lineage>
</organism>
<comment type="function">
    <text evidence="1">Catalyzes the attachment of isoleucine to tRNA(Ile). As IleRS can inadvertently accommodate and process structurally similar amino acids such as valine, to avoid such errors it has two additional distinct tRNA(Ile)-dependent editing activities. One activity is designated as 'pretransfer' editing and involves the hydrolysis of activated Val-AMP. The other activity is designated 'posttransfer' editing and involves deacylation of mischarged Val-tRNA(Ile).</text>
</comment>
<comment type="catalytic activity">
    <reaction evidence="1">
        <text>tRNA(Ile) + L-isoleucine + ATP = L-isoleucyl-tRNA(Ile) + AMP + diphosphate</text>
        <dbReference type="Rhea" id="RHEA:11060"/>
        <dbReference type="Rhea" id="RHEA-COMP:9666"/>
        <dbReference type="Rhea" id="RHEA-COMP:9695"/>
        <dbReference type="ChEBI" id="CHEBI:30616"/>
        <dbReference type="ChEBI" id="CHEBI:33019"/>
        <dbReference type="ChEBI" id="CHEBI:58045"/>
        <dbReference type="ChEBI" id="CHEBI:78442"/>
        <dbReference type="ChEBI" id="CHEBI:78528"/>
        <dbReference type="ChEBI" id="CHEBI:456215"/>
        <dbReference type="EC" id="6.1.1.5"/>
    </reaction>
</comment>
<comment type="cofactor">
    <cofactor evidence="1">
        <name>Zn(2+)</name>
        <dbReference type="ChEBI" id="CHEBI:29105"/>
    </cofactor>
    <text evidence="1">Binds 1 zinc ion per subunit.</text>
</comment>
<comment type="subunit">
    <text evidence="1">Monomer.</text>
</comment>
<comment type="subcellular location">
    <subcellularLocation>
        <location evidence="1">Cytoplasm</location>
    </subcellularLocation>
</comment>
<comment type="domain">
    <text evidence="1">IleRS has two distinct active sites: one for aminoacylation and one for editing. The misactivated valine is translocated from the active site to the editing site, which sterically excludes the correctly activated isoleucine. The single editing site contains two valyl binding pockets, one specific for each substrate (Val-AMP or Val-tRNA(Ile)).</text>
</comment>
<comment type="similarity">
    <text evidence="1">Belongs to the class-I aminoacyl-tRNA synthetase family. IleS type 1 subfamily.</text>
</comment>
<name>SYI_MESH7</name>
<evidence type="ECO:0000255" key="1">
    <source>
        <dbReference type="HAMAP-Rule" id="MF_02002"/>
    </source>
</evidence>
<keyword id="KW-0030">Aminoacyl-tRNA synthetase</keyword>
<keyword id="KW-0067">ATP-binding</keyword>
<keyword id="KW-0963">Cytoplasm</keyword>
<keyword id="KW-0436">Ligase</keyword>
<keyword id="KW-0479">Metal-binding</keyword>
<keyword id="KW-0547">Nucleotide-binding</keyword>
<keyword id="KW-0648">Protein biosynthesis</keyword>
<keyword id="KW-0862">Zinc</keyword>
<feature type="chain" id="PRO_0000098419" description="Isoleucine--tRNA ligase">
    <location>
        <begin position="1"/>
        <end position="886"/>
    </location>
</feature>
<feature type="short sequence motif" description="'HIGH' region">
    <location>
        <begin position="60"/>
        <end position="70"/>
    </location>
</feature>
<feature type="short sequence motif" description="'KMSKS' region">
    <location>
        <begin position="587"/>
        <end position="591"/>
    </location>
</feature>
<feature type="binding site" evidence="1">
    <location>
        <position position="546"/>
    </location>
    <ligand>
        <name>L-isoleucyl-5'-AMP</name>
        <dbReference type="ChEBI" id="CHEBI:178002"/>
    </ligand>
</feature>
<feature type="binding site" evidence="1">
    <location>
        <position position="590"/>
    </location>
    <ligand>
        <name>ATP</name>
        <dbReference type="ChEBI" id="CHEBI:30616"/>
    </ligand>
</feature>
<feature type="binding site" evidence="1">
    <location>
        <position position="856"/>
    </location>
    <ligand>
        <name>Zn(2+)</name>
        <dbReference type="ChEBI" id="CHEBI:29105"/>
    </ligand>
</feature>
<feature type="binding site" evidence="1">
    <location>
        <position position="859"/>
    </location>
    <ligand>
        <name>Zn(2+)</name>
        <dbReference type="ChEBI" id="CHEBI:29105"/>
    </ligand>
</feature>
<feature type="binding site" evidence="1">
    <location>
        <position position="870"/>
    </location>
    <ligand>
        <name>Zn(2+)</name>
        <dbReference type="ChEBI" id="CHEBI:29105"/>
    </ligand>
</feature>
<feature type="binding site" evidence="1">
    <location>
        <position position="873"/>
    </location>
    <ligand>
        <name>Zn(2+)</name>
        <dbReference type="ChEBI" id="CHEBI:29105"/>
    </ligand>
</feature>
<accession>Q4A8Y0</accession>
<reference key="1">
    <citation type="journal article" date="2005" name="J. Bacteriol.">
        <title>Swine and poultry pathogens: the complete genome sequences of two strains of Mycoplasma hyopneumoniae and a strain of Mycoplasma synoviae.</title>
        <authorList>
            <person name="Vasconcelos A.T.R."/>
            <person name="Ferreira H.B."/>
            <person name="Bizarro C.V."/>
            <person name="Bonatto S.L."/>
            <person name="Carvalho M.O."/>
            <person name="Pinto P.M."/>
            <person name="Almeida D.F."/>
            <person name="Almeida L.G.P."/>
            <person name="Almeida R."/>
            <person name="Alves-Junior L."/>
            <person name="Assuncao E.N."/>
            <person name="Azevedo V.A.C."/>
            <person name="Bogo M.R."/>
            <person name="Brigido M.M."/>
            <person name="Brocchi M."/>
            <person name="Burity H.A."/>
            <person name="Camargo A.A."/>
            <person name="Camargo S.S."/>
            <person name="Carepo M.S."/>
            <person name="Carraro D.M."/>
            <person name="de Mattos Cascardo J.C."/>
            <person name="Castro L.A."/>
            <person name="Cavalcanti G."/>
            <person name="Chemale G."/>
            <person name="Collevatti R.G."/>
            <person name="Cunha C.W."/>
            <person name="Dallagiovanna B."/>
            <person name="Dambros B.P."/>
            <person name="Dellagostin O.A."/>
            <person name="Falcao C."/>
            <person name="Fantinatti-Garboggini F."/>
            <person name="Felipe M.S.S."/>
            <person name="Fiorentin L."/>
            <person name="Franco G.R."/>
            <person name="Freitas N.S.A."/>
            <person name="Frias D."/>
            <person name="Grangeiro T.B."/>
            <person name="Grisard E.C."/>
            <person name="Guimaraes C.T."/>
            <person name="Hungria M."/>
            <person name="Jardim S.N."/>
            <person name="Krieger M.A."/>
            <person name="Laurino J.P."/>
            <person name="Lima L.F.A."/>
            <person name="Lopes M.I."/>
            <person name="Loreto E.L.S."/>
            <person name="Madeira H.M.F."/>
            <person name="Manfio G.P."/>
            <person name="Maranhao A.Q."/>
            <person name="Martinkovics C.T."/>
            <person name="Medeiros S.R.B."/>
            <person name="Moreira M.A.M."/>
            <person name="Neiva M."/>
            <person name="Ramalho-Neto C.E."/>
            <person name="Nicolas M.F."/>
            <person name="Oliveira S.C."/>
            <person name="Paixao R.F.C."/>
            <person name="Pedrosa F.O."/>
            <person name="Pena S.D.J."/>
            <person name="Pereira M."/>
            <person name="Pereira-Ferrari L."/>
            <person name="Piffer I."/>
            <person name="Pinto L.S."/>
            <person name="Potrich D.P."/>
            <person name="Salim A.C.M."/>
            <person name="Santos F.R."/>
            <person name="Schmitt R."/>
            <person name="Schneider M.P.C."/>
            <person name="Schrank A."/>
            <person name="Schrank I.S."/>
            <person name="Schuck A.F."/>
            <person name="Seuanez H.N."/>
            <person name="Silva D.W."/>
            <person name="Silva R."/>
            <person name="Silva S.C."/>
            <person name="Soares C.M.A."/>
            <person name="Souza K.R.L."/>
            <person name="Souza R.C."/>
            <person name="Staats C.C."/>
            <person name="Steffens M.B.R."/>
            <person name="Teixeira S.M.R."/>
            <person name="Urmenyi T.P."/>
            <person name="Vainstein M.H."/>
            <person name="Zuccherato L.W."/>
            <person name="Simpson A.J.G."/>
            <person name="Zaha A."/>
        </authorList>
    </citation>
    <scope>NUCLEOTIDE SEQUENCE [LARGE SCALE GENOMIC DNA]</scope>
    <source>
        <strain>7448</strain>
    </source>
</reference>
<proteinExistence type="inferred from homology"/>
<protein>
    <recommendedName>
        <fullName evidence="1">Isoleucine--tRNA ligase</fullName>
        <ecNumber evidence="1">6.1.1.5</ecNumber>
    </recommendedName>
    <alternativeName>
        <fullName evidence="1">Isoleucyl-tRNA synthetase</fullName>
        <shortName evidence="1">IleRS</shortName>
    </alternativeName>
</protein>
<dbReference type="EC" id="6.1.1.5" evidence="1"/>
<dbReference type="EMBL" id="AE017244">
    <property type="protein sequence ID" value="AAZ53409.2"/>
    <property type="molecule type" value="Genomic_DNA"/>
</dbReference>
<dbReference type="RefSeq" id="WP_020835502.1">
    <property type="nucleotide sequence ID" value="NC_007332.1"/>
</dbReference>
<dbReference type="SMR" id="Q4A8Y0"/>
<dbReference type="KEGG" id="mhp:MHP7448_0032"/>
<dbReference type="HOGENOM" id="CLU_001493_7_1_14"/>
<dbReference type="Proteomes" id="UP000000553">
    <property type="component" value="Chromosome"/>
</dbReference>
<dbReference type="GO" id="GO:0005829">
    <property type="term" value="C:cytosol"/>
    <property type="evidence" value="ECO:0007669"/>
    <property type="project" value="TreeGrafter"/>
</dbReference>
<dbReference type="GO" id="GO:0002161">
    <property type="term" value="F:aminoacyl-tRNA deacylase activity"/>
    <property type="evidence" value="ECO:0007669"/>
    <property type="project" value="InterPro"/>
</dbReference>
<dbReference type="GO" id="GO:0005524">
    <property type="term" value="F:ATP binding"/>
    <property type="evidence" value="ECO:0007669"/>
    <property type="project" value="UniProtKB-UniRule"/>
</dbReference>
<dbReference type="GO" id="GO:0004822">
    <property type="term" value="F:isoleucine-tRNA ligase activity"/>
    <property type="evidence" value="ECO:0007669"/>
    <property type="project" value="UniProtKB-UniRule"/>
</dbReference>
<dbReference type="GO" id="GO:0000049">
    <property type="term" value="F:tRNA binding"/>
    <property type="evidence" value="ECO:0007669"/>
    <property type="project" value="InterPro"/>
</dbReference>
<dbReference type="GO" id="GO:0008270">
    <property type="term" value="F:zinc ion binding"/>
    <property type="evidence" value="ECO:0007669"/>
    <property type="project" value="UniProtKB-UniRule"/>
</dbReference>
<dbReference type="GO" id="GO:0006428">
    <property type="term" value="P:isoleucyl-tRNA aminoacylation"/>
    <property type="evidence" value="ECO:0007669"/>
    <property type="project" value="UniProtKB-UniRule"/>
</dbReference>
<dbReference type="CDD" id="cd07960">
    <property type="entry name" value="Anticodon_Ia_Ile_BEm"/>
    <property type="match status" value="1"/>
</dbReference>
<dbReference type="CDD" id="cd00818">
    <property type="entry name" value="IleRS_core"/>
    <property type="match status" value="1"/>
</dbReference>
<dbReference type="FunFam" id="3.40.50.620:FF:000152">
    <property type="entry name" value="Isoleucine--tRNA ligase"/>
    <property type="match status" value="1"/>
</dbReference>
<dbReference type="Gene3D" id="1.10.730.20">
    <property type="match status" value="1"/>
</dbReference>
<dbReference type="Gene3D" id="3.40.50.620">
    <property type="entry name" value="HUPs"/>
    <property type="match status" value="2"/>
</dbReference>
<dbReference type="Gene3D" id="1.10.10.830">
    <property type="entry name" value="Ile-tRNA synthetase CP2 domain-like"/>
    <property type="match status" value="1"/>
</dbReference>
<dbReference type="HAMAP" id="MF_02002">
    <property type="entry name" value="Ile_tRNA_synth_type1"/>
    <property type="match status" value="1"/>
</dbReference>
<dbReference type="InterPro" id="IPR001412">
    <property type="entry name" value="aa-tRNA-synth_I_CS"/>
</dbReference>
<dbReference type="InterPro" id="IPR002300">
    <property type="entry name" value="aa-tRNA-synth_Ia"/>
</dbReference>
<dbReference type="InterPro" id="IPR033708">
    <property type="entry name" value="Anticodon_Ile_BEm"/>
</dbReference>
<dbReference type="InterPro" id="IPR002301">
    <property type="entry name" value="Ile-tRNA-ligase"/>
</dbReference>
<dbReference type="InterPro" id="IPR023585">
    <property type="entry name" value="Ile-tRNA-ligase_type1"/>
</dbReference>
<dbReference type="InterPro" id="IPR050081">
    <property type="entry name" value="Ile-tRNA_ligase"/>
</dbReference>
<dbReference type="InterPro" id="IPR013155">
    <property type="entry name" value="M/V/L/I-tRNA-synth_anticd-bd"/>
</dbReference>
<dbReference type="InterPro" id="IPR014729">
    <property type="entry name" value="Rossmann-like_a/b/a_fold"/>
</dbReference>
<dbReference type="InterPro" id="IPR009080">
    <property type="entry name" value="tRNAsynth_Ia_anticodon-bd"/>
</dbReference>
<dbReference type="InterPro" id="IPR009008">
    <property type="entry name" value="Val/Leu/Ile-tRNA-synth_edit"/>
</dbReference>
<dbReference type="NCBIfam" id="TIGR00392">
    <property type="entry name" value="ileS"/>
    <property type="match status" value="1"/>
</dbReference>
<dbReference type="PANTHER" id="PTHR42765:SF1">
    <property type="entry name" value="ISOLEUCINE--TRNA LIGASE, MITOCHONDRIAL"/>
    <property type="match status" value="1"/>
</dbReference>
<dbReference type="PANTHER" id="PTHR42765">
    <property type="entry name" value="SOLEUCYL-TRNA SYNTHETASE"/>
    <property type="match status" value="1"/>
</dbReference>
<dbReference type="Pfam" id="PF08264">
    <property type="entry name" value="Anticodon_1"/>
    <property type="match status" value="1"/>
</dbReference>
<dbReference type="Pfam" id="PF00133">
    <property type="entry name" value="tRNA-synt_1"/>
    <property type="match status" value="1"/>
</dbReference>
<dbReference type="PRINTS" id="PR00984">
    <property type="entry name" value="TRNASYNTHILE"/>
</dbReference>
<dbReference type="SUPFAM" id="SSF47323">
    <property type="entry name" value="Anticodon-binding domain of a subclass of class I aminoacyl-tRNA synthetases"/>
    <property type="match status" value="1"/>
</dbReference>
<dbReference type="SUPFAM" id="SSF52374">
    <property type="entry name" value="Nucleotidylyl transferase"/>
    <property type="match status" value="1"/>
</dbReference>
<dbReference type="SUPFAM" id="SSF50677">
    <property type="entry name" value="ValRS/IleRS/LeuRS editing domain"/>
    <property type="match status" value="1"/>
</dbReference>
<dbReference type="PROSITE" id="PS00178">
    <property type="entry name" value="AA_TRNA_LIGASE_I"/>
    <property type="match status" value="1"/>
</dbReference>
<sequence length="886" mass="104109">MDKNFYKNSLNIFNSNFSMKANLSEKDKFYADFWEKNQIYQQILRKRRGNPRFILHDGPPYANGDIHIGHALNKILKDIIVRYKTMAGFYSPFVPGWDTHGLPIENKIINQIGSKSTLEIRRKSNDFANSQILAQMAQFKKLNLLTDFKQIYQTNTPNYEAKQLKLFKKMVSRGLVYRALKPVYWSPSSQSALAEAEIEYLEYRSPSLFTSFDIKKGNNFVAENDKLIIWTTTPWTLIANSGVAVGENFDYVRIKNEENFYVLAANLLEKLAAIFDWKHYEIIDNFPGKSILGIKYLHPIFEKICPIVSGNHVSLDVGSGLVHLAPLFGEDDYWIGRENNLEMVMHVNDDGKFNENAGQFSGQFYANSNKLITEFLEKKSKILHLSFIDHSFPHDWRTLKPVIYRGTPQWFVSIEKIKKDLEKAIEEIEFPENWLKKRLTKMVVERKDWLISRQRSWGIPLIIFYDQNKEPVLDKPEIFDYIISLVEKFGSRIWYEKTTDELLPEKYQNLGWTKENDILDVWFDSGVSFFAANISDEKPPFDIYFEGSDQYRGWFNSSLINSVIYFGFSPYKKLLSHGFVVDAKGNKMSKSRGNGVDPLVILSKYGCDIFRLWVANSEYYNDIVYSEAIFEQNVEIYRKIRNTVRFLITNLADFKPKKYELTEVDLYIFNKIQKLKNEIIQNYDQNRFVRVVKIINNFIIEFSNFYLSIVKDILYADKKESLKRRQVQYNLYELLQVLNIAIAPIMPTTAEEIYSFIQKNNKQISVHMEEFFKESHFDEELVAKWDEFFQIKDSVYQLIEQKIKSKEIKRPNEVGVLLKTDSDFIKSIDLEKLLMVAKVEFSNEKTEILQLNWEKCPRCWNHFEKINKVCARCFEVLSEIVPEKNS</sequence>